<keyword id="KW-0007">Acetylation</keyword>
<keyword id="KW-1003">Cell membrane</keyword>
<keyword id="KW-0333">Golgi apparatus</keyword>
<keyword id="KW-1017">Isopeptide bond</keyword>
<keyword id="KW-0449">Lipoprotein</keyword>
<keyword id="KW-0472">Membrane</keyword>
<keyword id="KW-0564">Palmitate</keyword>
<keyword id="KW-0597">Phosphoprotein</keyword>
<keyword id="KW-1185">Reference proteome</keyword>
<keyword id="KW-0832">Ubl conjugation</keyword>
<protein>
    <recommendedName>
        <fullName>Caveolin-1</fullName>
    </recommendedName>
</protein>
<reference key="1">
    <citation type="submission" date="1997-02" db="EMBL/GenBank/DDBJ databases">
        <title>Cloning and characterization of the cDNA encoding bovine caveolin-1.</title>
        <authorList>
            <person name="Venema R.C."/>
        </authorList>
    </citation>
    <scope>NUCLEOTIDE SEQUENCE [MRNA]</scope>
    <source>
        <tissue>Aorta</tissue>
    </source>
</reference>
<reference key="2">
    <citation type="submission" date="2004-11" db="EMBL/GenBank/DDBJ databases">
        <title>Characterization of bovine caveolin 1 (CAV1).</title>
        <authorList>
            <person name="Diouf M.N."/>
            <person name="Lefebvre R."/>
            <person name="Silversides D.W."/>
            <person name="Sirois J."/>
            <person name="Lussier J.G."/>
        </authorList>
    </citation>
    <scope>NUCLEOTIDE SEQUENCE [MRNA]</scope>
</reference>
<reference key="3">
    <citation type="journal article" date="2003" name="Nature">
        <title>Comparative analyses of multi-species sequences from targeted genomic regions.</title>
        <authorList>
            <person name="Thomas J.W."/>
            <person name="Touchman J.W."/>
            <person name="Blakesley R.W."/>
            <person name="Bouffard G.G."/>
            <person name="Beckstrom-Sternberg S.M."/>
            <person name="Margulies E.H."/>
            <person name="Blanchette M."/>
            <person name="Siepel A.C."/>
            <person name="Thomas P.J."/>
            <person name="McDowell J.C."/>
            <person name="Maskeri B."/>
            <person name="Hansen N.F."/>
            <person name="Schwartz M.S."/>
            <person name="Weber R.J."/>
            <person name="Kent W.J."/>
            <person name="Karolchik D."/>
            <person name="Bruen T.C."/>
            <person name="Bevan R."/>
            <person name="Cutler D.J."/>
            <person name="Schwartz S."/>
            <person name="Elnitski L."/>
            <person name="Idol J.R."/>
            <person name="Prasad A.B."/>
            <person name="Lee-Lin S.-Q."/>
            <person name="Maduro V.V.B."/>
            <person name="Summers T.J."/>
            <person name="Portnoy M.E."/>
            <person name="Dietrich N.L."/>
            <person name="Akhter N."/>
            <person name="Ayele K."/>
            <person name="Benjamin B."/>
            <person name="Cariaga K."/>
            <person name="Brinkley C.P."/>
            <person name="Brooks S.Y."/>
            <person name="Granite S."/>
            <person name="Guan X."/>
            <person name="Gupta J."/>
            <person name="Haghighi P."/>
            <person name="Ho S.-L."/>
            <person name="Huang M.C."/>
            <person name="Karlins E."/>
            <person name="Laric P.L."/>
            <person name="Legaspi R."/>
            <person name="Lim M.J."/>
            <person name="Maduro Q.L."/>
            <person name="Masiello C.A."/>
            <person name="Mastrian S.D."/>
            <person name="McCloskey J.C."/>
            <person name="Pearson R."/>
            <person name="Stantripop S."/>
            <person name="Tiongson E.E."/>
            <person name="Tran J.T."/>
            <person name="Tsurgeon C."/>
            <person name="Vogt J.L."/>
            <person name="Walker M.A."/>
            <person name="Wetherby K.D."/>
            <person name="Wiggins L.S."/>
            <person name="Young A.C."/>
            <person name="Zhang L.-H."/>
            <person name="Osoegawa K."/>
            <person name="Zhu B."/>
            <person name="Zhao B."/>
            <person name="Shu C.L."/>
            <person name="De Jong P.J."/>
            <person name="Lawrence C.E."/>
            <person name="Smit A.F."/>
            <person name="Chakravarti A."/>
            <person name="Haussler D."/>
            <person name="Green P."/>
            <person name="Miller W."/>
            <person name="Green E.D."/>
        </authorList>
    </citation>
    <scope>NUCLEOTIDE SEQUENCE [LARGE SCALE GENOMIC DNA]</scope>
</reference>
<gene>
    <name type="primary">CAV1</name>
</gene>
<dbReference type="EMBL" id="U86639">
    <property type="protein sequence ID" value="AAB47274.1"/>
    <property type="molecule type" value="mRNA"/>
</dbReference>
<dbReference type="EMBL" id="AY823915">
    <property type="protein sequence ID" value="AAV83691.1"/>
    <property type="molecule type" value="mRNA"/>
</dbReference>
<dbReference type="EMBL" id="DP000008">
    <property type="protein sequence ID" value="AAR16256.1"/>
    <property type="molecule type" value="Genomic_DNA"/>
</dbReference>
<dbReference type="RefSeq" id="NP_776429.1">
    <property type="nucleotide sequence ID" value="NM_174004.3"/>
</dbReference>
<dbReference type="SMR" id="P79132"/>
<dbReference type="BioGRID" id="158412">
    <property type="interactions" value="1"/>
</dbReference>
<dbReference type="FunCoup" id="P79132">
    <property type="interactions" value="829"/>
</dbReference>
<dbReference type="IntAct" id="P79132">
    <property type="interactions" value="2"/>
</dbReference>
<dbReference type="STRING" id="9913.ENSBTAP00000023751"/>
<dbReference type="SwissPalm" id="P79132"/>
<dbReference type="PaxDb" id="9913-ENSBTAP00000023751"/>
<dbReference type="GeneID" id="281040"/>
<dbReference type="KEGG" id="bta:281040"/>
<dbReference type="CTD" id="857"/>
<dbReference type="VEuPathDB" id="HostDB:ENSBTAG00000017869"/>
<dbReference type="eggNOG" id="ENOG502QUK5">
    <property type="taxonomic scope" value="Eukaryota"/>
</dbReference>
<dbReference type="HOGENOM" id="CLU_102582_0_0_1"/>
<dbReference type="InParanoid" id="P79132"/>
<dbReference type="OMA" id="MSGSKYV"/>
<dbReference type="OrthoDB" id="5917823at2759"/>
<dbReference type="TreeFam" id="TF315736"/>
<dbReference type="Reactome" id="R-BTA-203615">
    <property type="pathway name" value="eNOS activation"/>
</dbReference>
<dbReference type="Reactome" id="R-BTA-203641">
    <property type="pathway name" value="NOSTRIN mediated eNOS trafficking"/>
</dbReference>
<dbReference type="Reactome" id="R-BTA-210991">
    <property type="pathway name" value="Basigin interactions"/>
</dbReference>
<dbReference type="Reactome" id="R-BTA-4641262">
    <property type="pathway name" value="Disassembly of the destruction complex and recruitment of AXIN to the membrane"/>
</dbReference>
<dbReference type="Reactome" id="R-BTA-5218920">
    <property type="pathway name" value="VEGFR2 mediated vascular permeability"/>
</dbReference>
<dbReference type="Reactome" id="R-BTA-8980692">
    <property type="pathway name" value="RHOA GTPase cycle"/>
</dbReference>
<dbReference type="Reactome" id="R-BTA-9009391">
    <property type="pathway name" value="Extra-nuclear estrogen signaling"/>
</dbReference>
<dbReference type="Reactome" id="R-BTA-9013106">
    <property type="pathway name" value="RHOC GTPase cycle"/>
</dbReference>
<dbReference type="Reactome" id="R-BTA-9013148">
    <property type="pathway name" value="CDC42 GTPase cycle"/>
</dbReference>
<dbReference type="Reactome" id="R-BTA-9013149">
    <property type="pathway name" value="RAC1 GTPase cycle"/>
</dbReference>
<dbReference type="Reactome" id="R-BTA-9013404">
    <property type="pathway name" value="RAC2 GTPase cycle"/>
</dbReference>
<dbReference type="Reactome" id="R-BTA-9013405">
    <property type="pathway name" value="RHOD GTPase cycle"/>
</dbReference>
<dbReference type="Reactome" id="R-BTA-9013406">
    <property type="pathway name" value="RHOQ GTPase cycle"/>
</dbReference>
<dbReference type="Reactome" id="R-BTA-9013407">
    <property type="pathway name" value="RHOH GTPase cycle"/>
</dbReference>
<dbReference type="Reactome" id="R-BTA-9013408">
    <property type="pathway name" value="RHOG GTPase cycle"/>
</dbReference>
<dbReference type="Reactome" id="R-BTA-9013423">
    <property type="pathway name" value="RAC3 GTPase cycle"/>
</dbReference>
<dbReference type="Reactome" id="R-BTA-9035034">
    <property type="pathway name" value="RHOF GTPase cycle"/>
</dbReference>
<dbReference type="Reactome" id="R-BTA-9696264">
    <property type="pathway name" value="RND3 GTPase cycle"/>
</dbReference>
<dbReference type="Reactome" id="R-BTA-9696270">
    <property type="pathway name" value="RND2 GTPase cycle"/>
</dbReference>
<dbReference type="Reactome" id="R-BTA-9696273">
    <property type="pathway name" value="RND1 GTPase cycle"/>
</dbReference>
<dbReference type="Proteomes" id="UP000009136">
    <property type="component" value="Chromosome 4"/>
</dbReference>
<dbReference type="Bgee" id="ENSBTAG00000017869">
    <property type="expression patterns" value="Expressed in omental fat pad and 103 other cell types or tissues"/>
</dbReference>
<dbReference type="GO" id="GO:0005901">
    <property type="term" value="C:caveola"/>
    <property type="evidence" value="ECO:0000314"/>
    <property type="project" value="BHF-UCL"/>
</dbReference>
<dbReference type="GO" id="GO:0031410">
    <property type="term" value="C:cytoplasmic vesicle"/>
    <property type="evidence" value="ECO:0000318"/>
    <property type="project" value="GO_Central"/>
</dbReference>
<dbReference type="GO" id="GO:0005783">
    <property type="term" value="C:endoplasmic reticulum"/>
    <property type="evidence" value="ECO:0000250"/>
    <property type="project" value="HGNC-UCL"/>
</dbReference>
<dbReference type="GO" id="GO:0005768">
    <property type="term" value="C:endosome"/>
    <property type="evidence" value="ECO:0000250"/>
    <property type="project" value="UniProtKB"/>
</dbReference>
<dbReference type="GO" id="GO:0005794">
    <property type="term" value="C:Golgi apparatus"/>
    <property type="evidence" value="ECO:0000318"/>
    <property type="project" value="GO_Central"/>
</dbReference>
<dbReference type="GO" id="GO:0000139">
    <property type="term" value="C:Golgi membrane"/>
    <property type="evidence" value="ECO:0000250"/>
    <property type="project" value="HGNC-UCL"/>
</dbReference>
<dbReference type="GO" id="GO:0045121">
    <property type="term" value="C:membrane raft"/>
    <property type="evidence" value="ECO:0000314"/>
    <property type="project" value="ARUK-UCL"/>
</dbReference>
<dbReference type="GO" id="GO:0048471">
    <property type="term" value="C:perinuclear region of cytoplasm"/>
    <property type="evidence" value="ECO:0000318"/>
    <property type="project" value="GO_Central"/>
</dbReference>
<dbReference type="GO" id="GO:0042383">
    <property type="term" value="C:sarcolemma"/>
    <property type="evidence" value="ECO:0000314"/>
    <property type="project" value="BHF-UCL"/>
</dbReference>
<dbReference type="GO" id="GO:0051117">
    <property type="term" value="F:ATPase binding"/>
    <property type="evidence" value="ECO:0000353"/>
    <property type="project" value="ARUK-UCL"/>
</dbReference>
<dbReference type="GO" id="GO:0060090">
    <property type="term" value="F:molecular adaptor activity"/>
    <property type="evidence" value="ECO:0000318"/>
    <property type="project" value="GO_Central"/>
</dbReference>
<dbReference type="GO" id="GO:0008142">
    <property type="term" value="F:oxysterol binding"/>
    <property type="evidence" value="ECO:0000250"/>
    <property type="project" value="UniProtKB"/>
</dbReference>
<dbReference type="GO" id="GO:0019901">
    <property type="term" value="F:protein kinase binding"/>
    <property type="evidence" value="ECO:0000318"/>
    <property type="project" value="GO_Central"/>
</dbReference>
<dbReference type="GO" id="GO:0044325">
    <property type="term" value="F:transmembrane transporter binding"/>
    <property type="evidence" value="ECO:0000318"/>
    <property type="project" value="GO_Central"/>
</dbReference>
<dbReference type="GO" id="GO:0070836">
    <property type="term" value="P:caveola assembly"/>
    <property type="evidence" value="ECO:0000318"/>
    <property type="project" value="GO_Central"/>
</dbReference>
<dbReference type="GO" id="GO:0030154">
    <property type="term" value="P:cell differentiation"/>
    <property type="evidence" value="ECO:0000318"/>
    <property type="project" value="GO_Central"/>
</dbReference>
<dbReference type="GO" id="GO:0090090">
    <property type="term" value="P:negative regulation of canonical Wnt signaling pathway"/>
    <property type="evidence" value="ECO:0000250"/>
    <property type="project" value="UniProtKB"/>
</dbReference>
<dbReference type="GO" id="GO:0001937">
    <property type="term" value="P:negative regulation of endothelial cell proliferation"/>
    <property type="evidence" value="ECO:0000318"/>
    <property type="project" value="GO_Central"/>
</dbReference>
<dbReference type="GO" id="GO:0000122">
    <property type="term" value="P:negative regulation of transcription by RNA polymerase II"/>
    <property type="evidence" value="ECO:0000250"/>
    <property type="project" value="UniProtKB"/>
</dbReference>
<dbReference type="GO" id="GO:0031623">
    <property type="term" value="P:receptor internalization"/>
    <property type="evidence" value="ECO:0000250"/>
    <property type="project" value="UniProtKB"/>
</dbReference>
<dbReference type="GO" id="GO:0051480">
    <property type="term" value="P:regulation of cytosolic calcium ion concentration"/>
    <property type="evidence" value="ECO:0000318"/>
    <property type="project" value="GO_Central"/>
</dbReference>
<dbReference type="GO" id="GO:0031295">
    <property type="term" value="P:T cell costimulation"/>
    <property type="evidence" value="ECO:0000250"/>
    <property type="project" value="UniProtKB"/>
</dbReference>
<dbReference type="InterPro" id="IPR001612">
    <property type="entry name" value="Caveolin"/>
</dbReference>
<dbReference type="InterPro" id="IPR018361">
    <property type="entry name" value="Caveolin_CS"/>
</dbReference>
<dbReference type="PANTHER" id="PTHR10844">
    <property type="entry name" value="CAVEOLIN"/>
    <property type="match status" value="1"/>
</dbReference>
<dbReference type="PANTHER" id="PTHR10844:SF18">
    <property type="entry name" value="CAVEOLIN-1"/>
    <property type="match status" value="1"/>
</dbReference>
<dbReference type="Pfam" id="PF01146">
    <property type="entry name" value="Caveolin"/>
    <property type="match status" value="1"/>
</dbReference>
<dbReference type="PROSITE" id="PS01210">
    <property type="entry name" value="CAVEOLIN"/>
    <property type="match status" value="1"/>
</dbReference>
<name>CAV1_BOVIN</name>
<organism>
    <name type="scientific">Bos taurus</name>
    <name type="common">Bovine</name>
    <dbReference type="NCBI Taxonomy" id="9913"/>
    <lineage>
        <taxon>Eukaryota</taxon>
        <taxon>Metazoa</taxon>
        <taxon>Chordata</taxon>
        <taxon>Craniata</taxon>
        <taxon>Vertebrata</taxon>
        <taxon>Euteleostomi</taxon>
        <taxon>Mammalia</taxon>
        <taxon>Eutheria</taxon>
        <taxon>Laurasiatheria</taxon>
        <taxon>Artiodactyla</taxon>
        <taxon>Ruminantia</taxon>
        <taxon>Pecora</taxon>
        <taxon>Bovidae</taxon>
        <taxon>Bovinae</taxon>
        <taxon>Bos</taxon>
    </lineage>
</organism>
<sequence>MSGGKYVDSEGHLYTVPIREQGNIYKPNNKAMAEEMNEKQVYDAHTKEIDLVNRDPKHLNDDVVKIDFEDVIAEPEGTHSFDGIWKASFTTFTVTKYWFYRLLSALFGIPMALIWGIYFAILSFLHIWAVVPCIKSFLIEIQCISRVYSIYVHTFCDPLFEAIGKIFSNIRINTQKEI</sequence>
<comment type="function">
    <text evidence="3 4">May act as a scaffolding protein within caveolar membranes. Forms a stable heterooligomeric complex with CAV2 that targets to lipid rafts and drives caveolae formation. Mediates the recruitment of CAVIN proteins (CAVIN1/2/3/4) to the caveolae (By similarity). Interacts directly with G-protein alpha subunits and can functionally regulate their activity (By similarity). Involved in the costimulatory signal essential for T-cell receptor (TCR)-mediated T-cell activation. Its binding to DPP4 induces T-cell proliferation and NF-kappa-B activation in a T-cell receptor/CD3-dependent manner (By similarity). Recruits CTNNB1 to caveolar membranes and may regulate CTNNB1-mediated signaling through the Wnt pathway (By similarity). Negatively regulates TGFB1-mediated activation of SMAD2/3 by mediating the internalization of TGFBR1 from membrane rafts leading to its subsequent degradation (By similarity). Binds 20(S)-hydroxycholesterol (20(S)-OHC) (By similarity).</text>
</comment>
<comment type="subunit">
    <text evidence="2 3 4 5">Homooligomer. Interacts with GLIPR2. Interacts with NOSTRIN (By similarity). Interacts with SNAP25 and STX1A (By similarity). Interacts (via the N-terminus) with DPP4; the interaction is direct (By similarity). Interacts with CTNNB1, CDH1 and JUP. Interacts with PACSIN2; this interaction induces membrane tubulation (By similarity). Interacts with SLC7A9 (By similarity). Interacts with BMX and BTK. Interacts with TGFBR1. Interacts with CAVIN3 (via leucine-zipper domain) in a cholesterol-sensitive manner. Interacts with CAVIN1. Interacts with EHD2 in a cholesterol-dependent manner. Forms a ternary complex with UBXN6 and VCP; mediates CAV1 targeting to lysosomes for degradation. Interacts with ABCG1; this interaction regulates ABCG1-mediated cholesterol efflux (By similarity). Interacts with NEU3; this interaction enhances NEU3 sialidase activity within caveola. Interacts (via C-terminus) with SPRY1, SPRY2 (via C-terminus), SPRY3, and SPRY4 (By similarity). Interacts with IGFBP5; this interaction allows trafficking of IGFBP5 from the plasma membrane to the nucleus (By similarity).</text>
</comment>
<comment type="subcellular location">
    <subcellularLocation>
        <location evidence="1">Golgi apparatus membrane</location>
        <topology evidence="1">Peripheral membrane protein</topology>
    </subcellularLocation>
    <subcellularLocation>
        <location evidence="1">Cell membrane</location>
        <topology evidence="1">Peripheral membrane protein</topology>
    </subcellularLocation>
    <subcellularLocation>
        <location evidence="3">Membrane</location>
        <location evidence="3">Caveola</location>
        <topology evidence="1">Peripheral membrane protein</topology>
    </subcellularLocation>
    <subcellularLocation>
        <location evidence="4">Membrane raft</location>
    </subcellularLocation>
    <text evidence="1">Colocalized with DPP4 in membrane rafts. Potential hairpin-like structure in the membrane. Membrane protein of caveolae (By similarity).</text>
</comment>
<comment type="PTM">
    <text evidence="4">Phosphorylated at Tyr-14 by ABL1 in response to oxidative stress.</text>
</comment>
<comment type="PTM">
    <text evidence="4">Ubiquitinated. Undergo monoubiquitination and multi- and/or polyubiquitination. Monoubiquitination of N-terminal lysines promotes integration in a ternary complex with UBXN6 and VCP which promotes oligomeric CAV1 targeting to lysosomes for degradation. Ubiquitinated by ZNRF1; leading to degradation and modulation of the TLR4-mediated immune response.</text>
</comment>
<comment type="similarity">
    <text evidence="7">Belongs to the caveolin family.</text>
</comment>
<accession>P79132</accession>
<accession>A4D7R5</accession>
<accession>Q5PX19</accession>
<evidence type="ECO:0000250" key="1"/>
<evidence type="ECO:0000250" key="2">
    <source>
        <dbReference type="UniProtKB" id="P41350"/>
    </source>
</evidence>
<evidence type="ECO:0000250" key="3">
    <source>
        <dbReference type="UniProtKB" id="P49817"/>
    </source>
</evidence>
<evidence type="ECO:0000250" key="4">
    <source>
        <dbReference type="UniProtKB" id="Q03135"/>
    </source>
</evidence>
<evidence type="ECO:0000250" key="5">
    <source>
        <dbReference type="UniProtKB" id="Q2IBA5"/>
    </source>
</evidence>
<evidence type="ECO:0000255" key="6"/>
<evidence type="ECO:0000305" key="7"/>
<proteinExistence type="evidence at transcript level"/>
<feature type="initiator methionine" description="Removed" evidence="4">
    <location>
        <position position="1"/>
    </location>
</feature>
<feature type="chain" id="PRO_0000144133" description="Caveolin-1">
    <location>
        <begin position="2"/>
        <end position="178"/>
    </location>
</feature>
<feature type="topological domain" description="Cytoplasmic" evidence="6">
    <location>
        <begin position="2"/>
        <end position="104"/>
    </location>
</feature>
<feature type="intramembrane region" description="Helical" evidence="6">
    <location>
        <begin position="105"/>
        <end position="125"/>
    </location>
</feature>
<feature type="topological domain" description="Cytoplasmic" evidence="6">
    <location>
        <begin position="126"/>
        <end position="178"/>
    </location>
</feature>
<feature type="region of interest" description="Required for homooligomerization" evidence="4">
    <location>
        <begin position="2"/>
        <end position="94"/>
    </location>
</feature>
<feature type="region of interest" description="Interaction with CAVIN3" evidence="4">
    <location>
        <begin position="82"/>
        <end position="94"/>
    </location>
</feature>
<feature type="region of interest" description="Interacts with SPRY1, SPRY2, SPRY3 and SPRY4" evidence="3">
    <location>
        <begin position="131"/>
        <end position="142"/>
    </location>
</feature>
<feature type="region of interest" description="Interacts with SPRY1, SPRY2, and SPRY4" evidence="3">
    <location>
        <begin position="149"/>
        <end position="160"/>
    </location>
</feature>
<feature type="region of interest" description="Interacts with SPRY1, SPRY2, SPRY3 and SPRY4" evidence="3">
    <location>
        <begin position="167"/>
        <end position="178"/>
    </location>
</feature>
<feature type="modified residue" description="N-acetylserine" evidence="4">
    <location>
        <position position="2"/>
    </location>
</feature>
<feature type="modified residue" description="Phosphoserine" evidence="2">
    <location>
        <position position="2"/>
    </location>
</feature>
<feature type="modified residue" description="N6-acetyllysine; alternate" evidence="4">
    <location>
        <position position="5"/>
    </location>
</feature>
<feature type="modified residue" description="Phosphotyrosine" evidence="4">
    <location>
        <position position="6"/>
    </location>
</feature>
<feature type="modified residue" description="Phosphoserine" evidence="3">
    <location>
        <position position="9"/>
    </location>
</feature>
<feature type="modified residue" description="Phosphotyrosine; by ABL1" evidence="3">
    <location>
        <position position="14"/>
    </location>
</feature>
<feature type="modified residue" description="Phosphotyrosine" evidence="4">
    <location>
        <position position="25"/>
    </location>
</feature>
<feature type="lipid moiety-binding region" description="S-palmitoyl cysteine" evidence="1">
    <location>
        <position position="133"/>
    </location>
</feature>
<feature type="lipid moiety-binding region" description="S-palmitoyl cysteine" evidence="1">
    <location>
        <position position="143"/>
    </location>
</feature>
<feature type="lipid moiety-binding region" description="S-palmitoyl cysteine" evidence="1">
    <location>
        <position position="156"/>
    </location>
</feature>
<feature type="cross-link" description="Glycyl lysine isopeptide (Lys-Gly) (interchain with G-Cter in ubiquitin); alternate" evidence="4">
    <location>
        <position position="5"/>
    </location>
</feature>
<feature type="cross-link" description="Glycyl lysine isopeptide (Lys-Gly) (interchain with G-Cter in ubiquitin)" evidence="4">
    <location>
        <position position="26"/>
    </location>
</feature>
<feature type="cross-link" description="Glycyl lysine isopeptide (Lys-Gly) (interchain with G-Cter in ubiquitin)" evidence="4">
    <location>
        <position position="30"/>
    </location>
</feature>
<feature type="cross-link" description="Glycyl lysine isopeptide (Lys-Gly) (interchain with G-Cter in ubiquitin)" evidence="4">
    <location>
        <position position="39"/>
    </location>
</feature>
<feature type="cross-link" description="Glycyl lysine isopeptide (Lys-Gly) (interchain with G-Cter in ubiquitin)" evidence="4">
    <location>
        <position position="47"/>
    </location>
</feature>
<feature type="cross-link" description="Glycyl lysine isopeptide (Lys-Gly) (interchain with G-Cter in ubiquitin)" evidence="4">
    <location>
        <position position="57"/>
    </location>
</feature>